<comment type="function">
    <text evidence="1 4">Promotes megakaryocyte differentiation by up-regulating RUNX1 expression (PubMed:25134913). Regulates RUNX1 expression by activating the proximal promoter of the RUNX1 gene and by enhancing the translation activity of an internal ribosome entry site (IRES) element in the RUNX1 gene (By similarity).</text>
</comment>
<comment type="subcellular location">
    <subcellularLocation>
        <location evidence="1">Cytoplasm</location>
    </subcellularLocation>
</comment>
<comment type="alternative products">
    <event type="alternative splicing"/>
    <isoform>
        <id>Q8BWR2-1</id>
        <name>1</name>
        <sequence type="displayed"/>
    </isoform>
    <isoform>
        <id>Q8BWR2-2</id>
        <name>2</name>
        <sequence type="described" ref="VSP_024808"/>
    </isoform>
</comment>
<comment type="similarity">
    <text evidence="6">Belongs to the PITHD1 family.</text>
</comment>
<evidence type="ECO:0000250" key="1">
    <source>
        <dbReference type="UniProtKB" id="Q9GZP4"/>
    </source>
</evidence>
<evidence type="ECO:0000255" key="2">
    <source>
        <dbReference type="PROSITE-ProRule" id="PRU00864"/>
    </source>
</evidence>
<evidence type="ECO:0000256" key="3">
    <source>
        <dbReference type="SAM" id="MobiDB-lite"/>
    </source>
</evidence>
<evidence type="ECO:0000269" key="4">
    <source>
    </source>
</evidence>
<evidence type="ECO:0000303" key="5">
    <source>
    </source>
</evidence>
<evidence type="ECO:0000305" key="6"/>
<reference key="1">
    <citation type="submission" date="2001-07" db="EMBL/GenBank/DDBJ databases">
        <title>Molecular cloning of TRP26, a novel member of the thioredoxin family, which is related to TRP32.</title>
        <authorList>
            <person name="Kondo N."/>
            <person name="Yodoi J."/>
            <person name="Tagaya Y."/>
        </authorList>
    </citation>
    <scope>NUCLEOTIDE SEQUENCE [MRNA] (ISOFORM 1)</scope>
</reference>
<reference key="2">
    <citation type="journal article" date="2005" name="Science">
        <title>The transcriptional landscape of the mammalian genome.</title>
        <authorList>
            <person name="Carninci P."/>
            <person name="Kasukawa T."/>
            <person name="Katayama S."/>
            <person name="Gough J."/>
            <person name="Frith M.C."/>
            <person name="Maeda N."/>
            <person name="Oyama R."/>
            <person name="Ravasi T."/>
            <person name="Lenhard B."/>
            <person name="Wells C."/>
            <person name="Kodzius R."/>
            <person name="Shimokawa K."/>
            <person name="Bajic V.B."/>
            <person name="Brenner S.E."/>
            <person name="Batalov S."/>
            <person name="Forrest A.R."/>
            <person name="Zavolan M."/>
            <person name="Davis M.J."/>
            <person name="Wilming L.G."/>
            <person name="Aidinis V."/>
            <person name="Allen J.E."/>
            <person name="Ambesi-Impiombato A."/>
            <person name="Apweiler R."/>
            <person name="Aturaliya R.N."/>
            <person name="Bailey T.L."/>
            <person name="Bansal M."/>
            <person name="Baxter L."/>
            <person name="Beisel K.W."/>
            <person name="Bersano T."/>
            <person name="Bono H."/>
            <person name="Chalk A.M."/>
            <person name="Chiu K.P."/>
            <person name="Choudhary V."/>
            <person name="Christoffels A."/>
            <person name="Clutterbuck D.R."/>
            <person name="Crowe M.L."/>
            <person name="Dalla E."/>
            <person name="Dalrymple B.P."/>
            <person name="de Bono B."/>
            <person name="Della Gatta G."/>
            <person name="di Bernardo D."/>
            <person name="Down T."/>
            <person name="Engstrom P."/>
            <person name="Fagiolini M."/>
            <person name="Faulkner G."/>
            <person name="Fletcher C.F."/>
            <person name="Fukushima T."/>
            <person name="Furuno M."/>
            <person name="Futaki S."/>
            <person name="Gariboldi M."/>
            <person name="Georgii-Hemming P."/>
            <person name="Gingeras T.R."/>
            <person name="Gojobori T."/>
            <person name="Green R.E."/>
            <person name="Gustincich S."/>
            <person name="Harbers M."/>
            <person name="Hayashi Y."/>
            <person name="Hensch T.K."/>
            <person name="Hirokawa N."/>
            <person name="Hill D."/>
            <person name="Huminiecki L."/>
            <person name="Iacono M."/>
            <person name="Ikeo K."/>
            <person name="Iwama A."/>
            <person name="Ishikawa T."/>
            <person name="Jakt M."/>
            <person name="Kanapin A."/>
            <person name="Katoh M."/>
            <person name="Kawasawa Y."/>
            <person name="Kelso J."/>
            <person name="Kitamura H."/>
            <person name="Kitano H."/>
            <person name="Kollias G."/>
            <person name="Krishnan S.P."/>
            <person name="Kruger A."/>
            <person name="Kummerfeld S.K."/>
            <person name="Kurochkin I.V."/>
            <person name="Lareau L.F."/>
            <person name="Lazarevic D."/>
            <person name="Lipovich L."/>
            <person name="Liu J."/>
            <person name="Liuni S."/>
            <person name="McWilliam S."/>
            <person name="Madan Babu M."/>
            <person name="Madera M."/>
            <person name="Marchionni L."/>
            <person name="Matsuda H."/>
            <person name="Matsuzawa S."/>
            <person name="Miki H."/>
            <person name="Mignone F."/>
            <person name="Miyake S."/>
            <person name="Morris K."/>
            <person name="Mottagui-Tabar S."/>
            <person name="Mulder N."/>
            <person name="Nakano N."/>
            <person name="Nakauchi H."/>
            <person name="Ng P."/>
            <person name="Nilsson R."/>
            <person name="Nishiguchi S."/>
            <person name="Nishikawa S."/>
            <person name="Nori F."/>
            <person name="Ohara O."/>
            <person name="Okazaki Y."/>
            <person name="Orlando V."/>
            <person name="Pang K.C."/>
            <person name="Pavan W.J."/>
            <person name="Pavesi G."/>
            <person name="Pesole G."/>
            <person name="Petrovsky N."/>
            <person name="Piazza S."/>
            <person name="Reed J."/>
            <person name="Reid J.F."/>
            <person name="Ring B.Z."/>
            <person name="Ringwald M."/>
            <person name="Rost B."/>
            <person name="Ruan Y."/>
            <person name="Salzberg S.L."/>
            <person name="Sandelin A."/>
            <person name="Schneider C."/>
            <person name="Schoenbach C."/>
            <person name="Sekiguchi K."/>
            <person name="Semple C.A."/>
            <person name="Seno S."/>
            <person name="Sessa L."/>
            <person name="Sheng Y."/>
            <person name="Shibata Y."/>
            <person name="Shimada H."/>
            <person name="Shimada K."/>
            <person name="Silva D."/>
            <person name="Sinclair B."/>
            <person name="Sperling S."/>
            <person name="Stupka E."/>
            <person name="Sugiura K."/>
            <person name="Sultana R."/>
            <person name="Takenaka Y."/>
            <person name="Taki K."/>
            <person name="Tammoja K."/>
            <person name="Tan S.L."/>
            <person name="Tang S."/>
            <person name="Taylor M.S."/>
            <person name="Tegner J."/>
            <person name="Teichmann S.A."/>
            <person name="Ueda H.R."/>
            <person name="van Nimwegen E."/>
            <person name="Verardo R."/>
            <person name="Wei C.L."/>
            <person name="Yagi K."/>
            <person name="Yamanishi H."/>
            <person name="Zabarovsky E."/>
            <person name="Zhu S."/>
            <person name="Zimmer A."/>
            <person name="Hide W."/>
            <person name="Bult C."/>
            <person name="Grimmond S.M."/>
            <person name="Teasdale R.D."/>
            <person name="Liu E.T."/>
            <person name="Brusic V."/>
            <person name="Quackenbush J."/>
            <person name="Wahlestedt C."/>
            <person name="Mattick J.S."/>
            <person name="Hume D.A."/>
            <person name="Kai C."/>
            <person name="Sasaki D."/>
            <person name="Tomaru Y."/>
            <person name="Fukuda S."/>
            <person name="Kanamori-Katayama M."/>
            <person name="Suzuki M."/>
            <person name="Aoki J."/>
            <person name="Arakawa T."/>
            <person name="Iida J."/>
            <person name="Imamura K."/>
            <person name="Itoh M."/>
            <person name="Kato T."/>
            <person name="Kawaji H."/>
            <person name="Kawagashira N."/>
            <person name="Kawashima T."/>
            <person name="Kojima M."/>
            <person name="Kondo S."/>
            <person name="Konno H."/>
            <person name="Nakano K."/>
            <person name="Ninomiya N."/>
            <person name="Nishio T."/>
            <person name="Okada M."/>
            <person name="Plessy C."/>
            <person name="Shibata K."/>
            <person name="Shiraki T."/>
            <person name="Suzuki S."/>
            <person name="Tagami M."/>
            <person name="Waki K."/>
            <person name="Watahiki A."/>
            <person name="Okamura-Oho Y."/>
            <person name="Suzuki H."/>
            <person name="Kawai J."/>
            <person name="Hayashizaki Y."/>
        </authorList>
    </citation>
    <scope>NUCLEOTIDE SEQUENCE [LARGE SCALE MRNA] (ISOFORMS 1 AND 2)</scope>
    <source>
        <strain>C57BL/6J</strain>
        <tissue>Liver</tissue>
    </source>
</reference>
<reference key="3">
    <citation type="journal article" date="2009" name="PLoS Biol.">
        <title>Lineage-specific biology revealed by a finished genome assembly of the mouse.</title>
        <authorList>
            <person name="Church D.M."/>
            <person name="Goodstadt L."/>
            <person name="Hillier L.W."/>
            <person name="Zody M.C."/>
            <person name="Goldstein S."/>
            <person name="She X."/>
            <person name="Bult C.J."/>
            <person name="Agarwala R."/>
            <person name="Cherry J.L."/>
            <person name="DiCuccio M."/>
            <person name="Hlavina W."/>
            <person name="Kapustin Y."/>
            <person name="Meric P."/>
            <person name="Maglott D."/>
            <person name="Birtle Z."/>
            <person name="Marques A.C."/>
            <person name="Graves T."/>
            <person name="Zhou S."/>
            <person name="Teague B."/>
            <person name="Potamousis K."/>
            <person name="Churas C."/>
            <person name="Place M."/>
            <person name="Herschleb J."/>
            <person name="Runnheim R."/>
            <person name="Forrest D."/>
            <person name="Amos-Landgraf J."/>
            <person name="Schwartz D.C."/>
            <person name="Cheng Z."/>
            <person name="Lindblad-Toh K."/>
            <person name="Eichler E.E."/>
            <person name="Ponting C.P."/>
        </authorList>
    </citation>
    <scope>NUCLEOTIDE SEQUENCE [LARGE SCALE GENOMIC DNA]</scope>
    <source>
        <strain>C57BL/6J</strain>
    </source>
</reference>
<reference key="4">
    <citation type="journal article" date="2004" name="Genome Res.">
        <title>The status, quality, and expansion of the NIH full-length cDNA project: the Mammalian Gene Collection (MGC).</title>
        <authorList>
            <consortium name="The MGC Project Team"/>
        </authorList>
    </citation>
    <scope>NUCLEOTIDE SEQUENCE [LARGE SCALE MRNA] (ISOFORM 1)</scope>
    <source>
        <strain>C57BL/6J</strain>
    </source>
</reference>
<reference key="5">
    <citation type="journal article" date="2010" name="Cell">
        <title>A tissue-specific atlas of mouse protein phosphorylation and expression.</title>
        <authorList>
            <person name="Huttlin E.L."/>
            <person name="Jedrychowski M.P."/>
            <person name="Elias J.E."/>
            <person name="Goswami T."/>
            <person name="Rad R."/>
            <person name="Beausoleil S.A."/>
            <person name="Villen J."/>
            <person name="Haas W."/>
            <person name="Sowa M.E."/>
            <person name="Gygi S.P."/>
        </authorList>
    </citation>
    <scope>IDENTIFICATION BY MASS SPECTROMETRY [LARGE SCALE ANALYSIS]</scope>
    <source>
        <tissue>Brain</tissue>
        <tissue>Liver</tissue>
        <tissue>Lung</tissue>
        <tissue>Pancreas</tissue>
        <tissue>Spleen</tissue>
        <tissue>Testis</tissue>
    </source>
</reference>
<reference key="6">
    <citation type="journal article" date="2015" name="Cell. Mol. Life Sci.">
        <title>Novel function of PITH domain-containing 1 as an activator of internal ribosomal entry site to enhance RUNX1 expression and promote megakaryocyte differentiation.</title>
        <authorList>
            <person name="Lu B."/>
            <person name="Sun X."/>
            <person name="Chen Y."/>
            <person name="Jin Q."/>
            <person name="Liang Q."/>
            <person name="Liu S."/>
            <person name="Li Y."/>
            <person name="Zhou Y."/>
            <person name="Li W."/>
            <person name="Huang Z."/>
        </authorList>
    </citation>
    <scope>FUNCTION</scope>
</reference>
<protein>
    <recommendedName>
        <fullName>PITH domain-containing protein 1</fullName>
    </recommendedName>
</protein>
<feature type="chain" id="PRO_0000285033" description="PITH domain-containing protein 1">
    <location>
        <begin position="1"/>
        <end position="211"/>
    </location>
</feature>
<feature type="domain" description="PITH" evidence="2">
    <location>
        <begin position="20"/>
        <end position="192"/>
    </location>
</feature>
<feature type="region of interest" description="Disordered" evidence="3">
    <location>
        <begin position="1"/>
        <end position="20"/>
    </location>
</feature>
<feature type="modified residue" description="Phosphotyrosine" evidence="1">
    <location>
        <position position="189"/>
    </location>
</feature>
<feature type="splice variant" id="VSP_024808" description="In isoform 2." evidence="5">
    <original>ANPADHRVHQVTPQTHFIS</original>
    <variation>PNQQTTGCIRSLRRHTSFLKGQPGLPQMRC</variation>
    <location>
        <begin position="193"/>
        <end position="211"/>
    </location>
</feature>
<dbReference type="EMBL" id="AF400670">
    <property type="protein sequence ID" value="AAO85407.1"/>
    <property type="molecule type" value="mRNA"/>
</dbReference>
<dbReference type="EMBL" id="AK004208">
    <property type="protein sequence ID" value="BAC25071.1"/>
    <property type="molecule type" value="mRNA"/>
</dbReference>
<dbReference type="EMBL" id="AK050261">
    <property type="protein sequence ID" value="BAC34151.1"/>
    <property type="molecule type" value="mRNA"/>
</dbReference>
<dbReference type="EMBL" id="AL672076">
    <property type="status" value="NOT_ANNOTATED_CDS"/>
    <property type="molecule type" value="Genomic_DNA"/>
</dbReference>
<dbReference type="EMBL" id="BC052695">
    <property type="protein sequence ID" value="AAH52695.1"/>
    <property type="molecule type" value="mRNA"/>
</dbReference>
<dbReference type="CCDS" id="CCDS51330.1">
    <molecule id="Q8BWR2-1"/>
</dbReference>
<dbReference type="RefSeq" id="NP_079687.3">
    <molecule id="Q8BWR2-1"/>
    <property type="nucleotide sequence ID" value="NM_025411.4"/>
</dbReference>
<dbReference type="SMR" id="Q8BWR2"/>
<dbReference type="BioGRID" id="211285">
    <property type="interactions" value="2"/>
</dbReference>
<dbReference type="FunCoup" id="Q8BWR2">
    <property type="interactions" value="4020"/>
</dbReference>
<dbReference type="STRING" id="10090.ENSMUSP00000101477"/>
<dbReference type="PhosphoSitePlus" id="Q8BWR2"/>
<dbReference type="SwissPalm" id="Q8BWR2"/>
<dbReference type="PaxDb" id="10090-ENSMUSP00000101477"/>
<dbReference type="PeptideAtlas" id="Q8BWR2"/>
<dbReference type="ProteomicsDB" id="288169">
    <molecule id="Q8BWR2-1"/>
</dbReference>
<dbReference type="ProteomicsDB" id="288170">
    <molecule id="Q8BWR2-2"/>
</dbReference>
<dbReference type="Pumba" id="Q8BWR2"/>
<dbReference type="Antibodypedia" id="2117">
    <property type="antibodies" value="11 antibodies from 8 providers"/>
</dbReference>
<dbReference type="DNASU" id="66193"/>
<dbReference type="Ensembl" id="ENSMUST00000105851.9">
    <molecule id="Q8BWR2-1"/>
    <property type="protein sequence ID" value="ENSMUSP00000101477.3"/>
    <property type="gene ID" value="ENSMUSG00000028669.16"/>
</dbReference>
<dbReference type="GeneID" id="66193"/>
<dbReference type="KEGG" id="mmu:66193"/>
<dbReference type="UCSC" id="uc012dnd.1">
    <molecule id="Q8BWR2-1"/>
    <property type="organism name" value="mouse"/>
</dbReference>
<dbReference type="AGR" id="MGI:1913443"/>
<dbReference type="CTD" id="57095"/>
<dbReference type="MGI" id="MGI:1913443">
    <property type="gene designation" value="Pithd1"/>
</dbReference>
<dbReference type="VEuPathDB" id="HostDB:ENSMUSG00000028669"/>
<dbReference type="eggNOG" id="KOG1730">
    <property type="taxonomic scope" value="Eukaryota"/>
</dbReference>
<dbReference type="GeneTree" id="ENSGT00490000043398"/>
<dbReference type="HOGENOM" id="CLU_072377_2_0_1"/>
<dbReference type="InParanoid" id="Q8BWR2"/>
<dbReference type="OMA" id="RLVFKPW"/>
<dbReference type="OrthoDB" id="2635at2759"/>
<dbReference type="PhylomeDB" id="Q8BWR2"/>
<dbReference type="TreeFam" id="TF314669"/>
<dbReference type="BioGRID-ORCS" id="66193">
    <property type="hits" value="0 hits in 76 CRISPR screens"/>
</dbReference>
<dbReference type="ChiTaRS" id="Pithd1">
    <property type="organism name" value="mouse"/>
</dbReference>
<dbReference type="PRO" id="PR:Q8BWR2"/>
<dbReference type="Proteomes" id="UP000000589">
    <property type="component" value="Chromosome 4"/>
</dbReference>
<dbReference type="RNAct" id="Q8BWR2">
    <property type="molecule type" value="protein"/>
</dbReference>
<dbReference type="Bgee" id="ENSMUSG00000028669">
    <property type="expression patterns" value="Expressed in dorsomedial nucleus of hypothalamus and 288 other cell types or tissues"/>
</dbReference>
<dbReference type="ExpressionAtlas" id="Q8BWR2">
    <property type="expression patterns" value="baseline and differential"/>
</dbReference>
<dbReference type="GO" id="GO:0005737">
    <property type="term" value="C:cytoplasm"/>
    <property type="evidence" value="ECO:0000314"/>
    <property type="project" value="MGI"/>
</dbReference>
<dbReference type="GO" id="GO:0097598">
    <property type="term" value="C:sperm cytoplasmic droplet"/>
    <property type="evidence" value="ECO:0000314"/>
    <property type="project" value="MGI"/>
</dbReference>
<dbReference type="GO" id="GO:0061956">
    <property type="term" value="P:penetration of cumulus oophorus"/>
    <property type="evidence" value="ECO:0000315"/>
    <property type="project" value="MGI"/>
</dbReference>
<dbReference type="GO" id="GO:0007341">
    <property type="term" value="P:penetration of zona pellucida"/>
    <property type="evidence" value="ECO:0000315"/>
    <property type="project" value="MGI"/>
</dbReference>
<dbReference type="GO" id="GO:0045893">
    <property type="term" value="P:positive regulation of DNA-templated transcription"/>
    <property type="evidence" value="ECO:0000250"/>
    <property type="project" value="UniProtKB"/>
</dbReference>
<dbReference type="GO" id="GO:0045654">
    <property type="term" value="P:positive regulation of megakaryocyte differentiation"/>
    <property type="evidence" value="ECO:0000315"/>
    <property type="project" value="UniProtKB"/>
</dbReference>
<dbReference type="GO" id="GO:0061136">
    <property type="term" value="P:regulation of proteasomal protein catabolic process"/>
    <property type="evidence" value="ECO:0000315"/>
    <property type="project" value="MGI"/>
</dbReference>
<dbReference type="GO" id="GO:0007286">
    <property type="term" value="P:spermatid development"/>
    <property type="evidence" value="ECO:0000315"/>
    <property type="project" value="MGI"/>
</dbReference>
<dbReference type="FunFam" id="2.60.120.470:FF:000002">
    <property type="entry name" value="PITH domain-containing protein 1"/>
    <property type="match status" value="1"/>
</dbReference>
<dbReference type="Gene3D" id="2.60.120.470">
    <property type="entry name" value="PITH domain"/>
    <property type="match status" value="1"/>
</dbReference>
<dbReference type="InterPro" id="IPR008979">
    <property type="entry name" value="Galactose-bd-like_sf"/>
</dbReference>
<dbReference type="InterPro" id="IPR045099">
    <property type="entry name" value="PITH1-like"/>
</dbReference>
<dbReference type="InterPro" id="IPR010400">
    <property type="entry name" value="PITH_dom"/>
</dbReference>
<dbReference type="InterPro" id="IPR037047">
    <property type="entry name" value="PITH_dom_sf"/>
</dbReference>
<dbReference type="PANTHER" id="PTHR12175">
    <property type="entry name" value="AD039 HT014 THIOREDOXIN FAMILY TRP26"/>
    <property type="match status" value="1"/>
</dbReference>
<dbReference type="PANTHER" id="PTHR12175:SF1">
    <property type="entry name" value="PITH DOMAIN-CONTAINING PROTEIN 1"/>
    <property type="match status" value="1"/>
</dbReference>
<dbReference type="Pfam" id="PF06201">
    <property type="entry name" value="PITH"/>
    <property type="match status" value="1"/>
</dbReference>
<dbReference type="SUPFAM" id="SSF49785">
    <property type="entry name" value="Galactose-binding domain-like"/>
    <property type="match status" value="1"/>
</dbReference>
<dbReference type="PROSITE" id="PS51532">
    <property type="entry name" value="PITH"/>
    <property type="match status" value="1"/>
</dbReference>
<keyword id="KW-0010">Activator</keyword>
<keyword id="KW-0025">Alternative splicing</keyword>
<keyword id="KW-0963">Cytoplasm</keyword>
<keyword id="KW-0597">Phosphoprotein</keyword>
<keyword id="KW-1185">Reference proteome</keyword>
<keyword id="KW-0804">Transcription</keyword>
<keyword id="KW-0805">Transcription regulation</keyword>
<proteinExistence type="evidence at protein level"/>
<accession>Q8BWR2</accession>
<accession>Q8BMZ1</accession>
<name>PITH1_MOUSE</name>
<gene>
    <name type="primary">Pithd1</name>
    <name type="synonym">Trp26</name>
</gene>
<sequence length="211" mass="24192">MSHGHSHGGGGCRCAAEREEPPEQRGLAYGLYLRIDLERLQCLNESREGSGRGVFKPWEERTDRSKFVESDADEELLFNIPFTGNVKLKGVIIMGEDDDSHPSEMRLYKNIPQMSFDDTEREPEQTFSLNRDITGELEYATKISRFSNVYHLSIHISKNFGADTTKIFYIGLRGEWTELRRHEVTICNYEASANPADHRVHQVTPQTHFIS</sequence>
<organism>
    <name type="scientific">Mus musculus</name>
    <name type="common">Mouse</name>
    <dbReference type="NCBI Taxonomy" id="10090"/>
    <lineage>
        <taxon>Eukaryota</taxon>
        <taxon>Metazoa</taxon>
        <taxon>Chordata</taxon>
        <taxon>Craniata</taxon>
        <taxon>Vertebrata</taxon>
        <taxon>Euteleostomi</taxon>
        <taxon>Mammalia</taxon>
        <taxon>Eutheria</taxon>
        <taxon>Euarchontoglires</taxon>
        <taxon>Glires</taxon>
        <taxon>Rodentia</taxon>
        <taxon>Myomorpha</taxon>
        <taxon>Muroidea</taxon>
        <taxon>Muridae</taxon>
        <taxon>Murinae</taxon>
        <taxon>Mus</taxon>
        <taxon>Mus</taxon>
    </lineage>
</organism>